<evidence type="ECO:0000255" key="1">
    <source>
        <dbReference type="HAMAP-Rule" id="MF_00272"/>
    </source>
</evidence>
<evidence type="ECO:0000255" key="2">
    <source>
        <dbReference type="PROSITE-ProRule" id="PRU01066"/>
    </source>
</evidence>
<name>GCSH_LISMF</name>
<feature type="chain" id="PRO_0000166224" description="Glycine cleavage system H protein">
    <location>
        <begin position="1"/>
        <end position="125"/>
    </location>
</feature>
<feature type="domain" description="Lipoyl-binding" evidence="2">
    <location>
        <begin position="22"/>
        <end position="104"/>
    </location>
</feature>
<feature type="modified residue" description="N6-lipoyllysine" evidence="1">
    <location>
        <position position="63"/>
    </location>
</feature>
<comment type="function">
    <text evidence="1">The glycine cleavage system catalyzes the degradation of glycine. The H protein shuttles the methylamine group of glycine from the P protein to the T protein.</text>
</comment>
<comment type="function">
    <text evidence="1">Is also involved in protein lipoylation via its role as an octanoyl/lipoyl carrier protein intermediate.</text>
</comment>
<comment type="cofactor">
    <cofactor evidence="1">
        <name>(R)-lipoate</name>
        <dbReference type="ChEBI" id="CHEBI:83088"/>
    </cofactor>
    <text evidence="1">Binds 1 lipoyl cofactor covalently.</text>
</comment>
<comment type="subunit">
    <text evidence="1">The glycine cleavage system is composed of four proteins: P, T, L and H.</text>
</comment>
<comment type="similarity">
    <text evidence="1">Belongs to the GcvH family.</text>
</comment>
<keyword id="KW-0450">Lipoyl</keyword>
<reference key="1">
    <citation type="journal article" date="2004" name="Nucleic Acids Res.">
        <title>Whole genome comparisons of serotype 4b and 1/2a strains of the food-borne pathogen Listeria monocytogenes reveal new insights into the core genome components of this species.</title>
        <authorList>
            <person name="Nelson K.E."/>
            <person name="Fouts D.E."/>
            <person name="Mongodin E.F."/>
            <person name="Ravel J."/>
            <person name="DeBoy R.T."/>
            <person name="Kolonay J.F."/>
            <person name="Rasko D.A."/>
            <person name="Angiuoli S.V."/>
            <person name="Gill S.R."/>
            <person name="Paulsen I.T."/>
            <person name="Peterson J.D."/>
            <person name="White O."/>
            <person name="Nelson W.C."/>
            <person name="Nierman W.C."/>
            <person name="Beanan M.J."/>
            <person name="Brinkac L.M."/>
            <person name="Daugherty S.C."/>
            <person name="Dodson R.J."/>
            <person name="Durkin A.S."/>
            <person name="Madupu R."/>
            <person name="Haft D.H."/>
            <person name="Selengut J."/>
            <person name="Van Aken S.E."/>
            <person name="Khouri H.M."/>
            <person name="Fedorova N."/>
            <person name="Forberger H.A."/>
            <person name="Tran B."/>
            <person name="Kathariou S."/>
            <person name="Wonderling L.D."/>
            <person name="Uhlich G.A."/>
            <person name="Bayles D.O."/>
            <person name="Luchansky J.B."/>
            <person name="Fraser C.M."/>
        </authorList>
    </citation>
    <scope>NUCLEOTIDE SEQUENCE [LARGE SCALE GENOMIC DNA]</scope>
    <source>
        <strain>F2365</strain>
    </source>
</reference>
<dbReference type="EMBL" id="AE017262">
    <property type="protein sequence ID" value="AAT05162.1"/>
    <property type="molecule type" value="Genomic_DNA"/>
</dbReference>
<dbReference type="RefSeq" id="WP_003725610.1">
    <property type="nucleotide sequence ID" value="NC_002973.6"/>
</dbReference>
<dbReference type="SMR" id="Q71X03"/>
<dbReference type="KEGG" id="lmf:LMOf2365_2396"/>
<dbReference type="HOGENOM" id="CLU_097408_2_0_9"/>
<dbReference type="GO" id="GO:0005829">
    <property type="term" value="C:cytosol"/>
    <property type="evidence" value="ECO:0007669"/>
    <property type="project" value="TreeGrafter"/>
</dbReference>
<dbReference type="GO" id="GO:0005960">
    <property type="term" value="C:glycine cleavage complex"/>
    <property type="evidence" value="ECO:0007669"/>
    <property type="project" value="InterPro"/>
</dbReference>
<dbReference type="GO" id="GO:0019464">
    <property type="term" value="P:glycine decarboxylation via glycine cleavage system"/>
    <property type="evidence" value="ECO:0007669"/>
    <property type="project" value="UniProtKB-UniRule"/>
</dbReference>
<dbReference type="CDD" id="cd06848">
    <property type="entry name" value="GCS_H"/>
    <property type="match status" value="1"/>
</dbReference>
<dbReference type="Gene3D" id="2.40.50.100">
    <property type="match status" value="1"/>
</dbReference>
<dbReference type="HAMAP" id="MF_00272">
    <property type="entry name" value="GcvH"/>
    <property type="match status" value="1"/>
</dbReference>
<dbReference type="InterPro" id="IPR003016">
    <property type="entry name" value="2-oxoA_DH_lipoyl-BS"/>
</dbReference>
<dbReference type="InterPro" id="IPR000089">
    <property type="entry name" value="Biotin_lipoyl"/>
</dbReference>
<dbReference type="InterPro" id="IPR002930">
    <property type="entry name" value="GCV_H"/>
</dbReference>
<dbReference type="InterPro" id="IPR033753">
    <property type="entry name" value="GCV_H/Fam206"/>
</dbReference>
<dbReference type="InterPro" id="IPR017453">
    <property type="entry name" value="GCV_H_sub"/>
</dbReference>
<dbReference type="InterPro" id="IPR011053">
    <property type="entry name" value="Single_hybrid_motif"/>
</dbReference>
<dbReference type="NCBIfam" id="TIGR00527">
    <property type="entry name" value="gcvH"/>
    <property type="match status" value="1"/>
</dbReference>
<dbReference type="NCBIfam" id="NF002270">
    <property type="entry name" value="PRK01202.1"/>
    <property type="match status" value="1"/>
</dbReference>
<dbReference type="PANTHER" id="PTHR11715">
    <property type="entry name" value="GLYCINE CLEAVAGE SYSTEM H PROTEIN"/>
    <property type="match status" value="1"/>
</dbReference>
<dbReference type="PANTHER" id="PTHR11715:SF3">
    <property type="entry name" value="GLYCINE CLEAVAGE SYSTEM H PROTEIN-RELATED"/>
    <property type="match status" value="1"/>
</dbReference>
<dbReference type="Pfam" id="PF01597">
    <property type="entry name" value="GCV_H"/>
    <property type="match status" value="1"/>
</dbReference>
<dbReference type="SUPFAM" id="SSF51230">
    <property type="entry name" value="Single hybrid motif"/>
    <property type="match status" value="1"/>
</dbReference>
<dbReference type="PROSITE" id="PS50968">
    <property type="entry name" value="BIOTINYL_LIPOYL"/>
    <property type="match status" value="1"/>
</dbReference>
<dbReference type="PROSITE" id="PS00189">
    <property type="entry name" value="LIPOYL"/>
    <property type="match status" value="1"/>
</dbReference>
<sequence>MSLPKDLLYTEEHEWVKADEGSYVIGITDFAQDQLGDIVFVELPEVGDTVAKGDSIGSIESVKTVSDFYAPVTGKVVAVNETLEDEPELINSNPYDTGWILKLEEVEEADVKALLSSDDYEKVLD</sequence>
<gene>
    <name evidence="1" type="primary">gcvH</name>
    <name type="ordered locus">LMOf2365_2396</name>
</gene>
<accession>Q71X03</accession>
<protein>
    <recommendedName>
        <fullName evidence="1">Glycine cleavage system H protein</fullName>
    </recommendedName>
    <alternativeName>
        <fullName evidence="1">Octanoyl/lipoyl carrier protein</fullName>
    </alternativeName>
</protein>
<proteinExistence type="inferred from homology"/>
<organism>
    <name type="scientific">Listeria monocytogenes serotype 4b (strain F2365)</name>
    <dbReference type="NCBI Taxonomy" id="265669"/>
    <lineage>
        <taxon>Bacteria</taxon>
        <taxon>Bacillati</taxon>
        <taxon>Bacillota</taxon>
        <taxon>Bacilli</taxon>
        <taxon>Bacillales</taxon>
        <taxon>Listeriaceae</taxon>
        <taxon>Listeria</taxon>
    </lineage>
</organism>